<sequence length="296" mass="31543">MTQSTASAHKTPVVTRTAEEIQALRPQLGRLALVPTMGALHTGHRSLIAQAREHAESVAVSIFVNPLQFGPNEDYDRYPRTFDHDLRVCAEEGVDVVFAPTVDVMYPDADGDSLGQIVTVDPGSMGRVLEGEFRPGFFHGVLTVVNKLFNLIRPDVAVFGQKDAQQLAVVRRMVRDLCLPVTIVAAPTVRDPDGLATSSRNVYLSAEERASALALSKALFAGADAASSGPAAVLAAARAILSEAARATPPVSVDYLALVDPTTFTEVGDDYRGDAVLAVAAWVGETRLIDNVPLTL</sequence>
<gene>
    <name evidence="1" type="primary">panC</name>
    <name type="ordered locus">Tfu_2884</name>
</gene>
<feature type="chain" id="PRO_0000305567" description="Pantothenate synthetase">
    <location>
        <begin position="1"/>
        <end position="296"/>
    </location>
</feature>
<feature type="active site" description="Proton donor" evidence="1">
    <location>
        <position position="44"/>
    </location>
</feature>
<feature type="binding site" evidence="1">
    <location>
        <begin position="37"/>
        <end position="44"/>
    </location>
    <ligand>
        <name>ATP</name>
        <dbReference type="ChEBI" id="CHEBI:30616"/>
    </ligand>
</feature>
<feature type="binding site" evidence="1">
    <location>
        <position position="68"/>
    </location>
    <ligand>
        <name>(R)-pantoate</name>
        <dbReference type="ChEBI" id="CHEBI:15980"/>
    </ligand>
</feature>
<feature type="binding site" evidence="1">
    <location>
        <position position="68"/>
    </location>
    <ligand>
        <name>beta-alanine</name>
        <dbReference type="ChEBI" id="CHEBI:57966"/>
    </ligand>
</feature>
<feature type="binding site" evidence="1">
    <location>
        <begin position="160"/>
        <end position="163"/>
    </location>
    <ligand>
        <name>ATP</name>
        <dbReference type="ChEBI" id="CHEBI:30616"/>
    </ligand>
</feature>
<feature type="binding site" evidence="1">
    <location>
        <position position="166"/>
    </location>
    <ligand>
        <name>(R)-pantoate</name>
        <dbReference type="ChEBI" id="CHEBI:15980"/>
    </ligand>
</feature>
<feature type="binding site" evidence="1">
    <location>
        <position position="189"/>
    </location>
    <ligand>
        <name>ATP</name>
        <dbReference type="ChEBI" id="CHEBI:30616"/>
    </ligand>
</feature>
<feature type="binding site" evidence="1">
    <location>
        <begin position="197"/>
        <end position="200"/>
    </location>
    <ligand>
        <name>ATP</name>
        <dbReference type="ChEBI" id="CHEBI:30616"/>
    </ligand>
</feature>
<evidence type="ECO:0000255" key="1">
    <source>
        <dbReference type="HAMAP-Rule" id="MF_00158"/>
    </source>
</evidence>
<comment type="function">
    <text evidence="1">Catalyzes the condensation of pantoate with beta-alanine in an ATP-dependent reaction via a pantoyl-adenylate intermediate.</text>
</comment>
<comment type="catalytic activity">
    <reaction evidence="1">
        <text>(R)-pantoate + beta-alanine + ATP = (R)-pantothenate + AMP + diphosphate + H(+)</text>
        <dbReference type="Rhea" id="RHEA:10912"/>
        <dbReference type="ChEBI" id="CHEBI:15378"/>
        <dbReference type="ChEBI" id="CHEBI:15980"/>
        <dbReference type="ChEBI" id="CHEBI:29032"/>
        <dbReference type="ChEBI" id="CHEBI:30616"/>
        <dbReference type="ChEBI" id="CHEBI:33019"/>
        <dbReference type="ChEBI" id="CHEBI:57966"/>
        <dbReference type="ChEBI" id="CHEBI:456215"/>
        <dbReference type="EC" id="6.3.2.1"/>
    </reaction>
</comment>
<comment type="pathway">
    <text evidence="1">Cofactor biosynthesis; (R)-pantothenate biosynthesis; (R)-pantothenate from (R)-pantoate and beta-alanine: step 1/1.</text>
</comment>
<comment type="subunit">
    <text evidence="1">Homodimer.</text>
</comment>
<comment type="subcellular location">
    <subcellularLocation>
        <location evidence="1">Cytoplasm</location>
    </subcellularLocation>
</comment>
<comment type="miscellaneous">
    <text evidence="1">The reaction proceeds by a bi uni uni bi ping pong mechanism.</text>
</comment>
<comment type="similarity">
    <text evidence="1">Belongs to the pantothenate synthetase family.</text>
</comment>
<keyword id="KW-0067">ATP-binding</keyword>
<keyword id="KW-0963">Cytoplasm</keyword>
<keyword id="KW-0436">Ligase</keyword>
<keyword id="KW-0547">Nucleotide-binding</keyword>
<keyword id="KW-0566">Pantothenate biosynthesis</keyword>
<proteinExistence type="inferred from homology"/>
<dbReference type="EC" id="6.3.2.1" evidence="1"/>
<dbReference type="EMBL" id="CP000088">
    <property type="protein sequence ID" value="AAZ56917.1"/>
    <property type="molecule type" value="Genomic_DNA"/>
</dbReference>
<dbReference type="RefSeq" id="WP_011293307.1">
    <property type="nucleotide sequence ID" value="NC_007333.1"/>
</dbReference>
<dbReference type="SMR" id="Q47KV5"/>
<dbReference type="STRING" id="269800.Tfu_2884"/>
<dbReference type="KEGG" id="tfu:Tfu_2884"/>
<dbReference type="eggNOG" id="COG0414">
    <property type="taxonomic scope" value="Bacteria"/>
</dbReference>
<dbReference type="HOGENOM" id="CLU_047148_0_2_11"/>
<dbReference type="OrthoDB" id="9773087at2"/>
<dbReference type="UniPathway" id="UPA00028">
    <property type="reaction ID" value="UER00005"/>
</dbReference>
<dbReference type="GO" id="GO:0005829">
    <property type="term" value="C:cytosol"/>
    <property type="evidence" value="ECO:0007669"/>
    <property type="project" value="TreeGrafter"/>
</dbReference>
<dbReference type="GO" id="GO:0005524">
    <property type="term" value="F:ATP binding"/>
    <property type="evidence" value="ECO:0007669"/>
    <property type="project" value="UniProtKB-KW"/>
</dbReference>
<dbReference type="GO" id="GO:0004592">
    <property type="term" value="F:pantoate-beta-alanine ligase activity"/>
    <property type="evidence" value="ECO:0007669"/>
    <property type="project" value="UniProtKB-UniRule"/>
</dbReference>
<dbReference type="GO" id="GO:0015940">
    <property type="term" value="P:pantothenate biosynthetic process"/>
    <property type="evidence" value="ECO:0007669"/>
    <property type="project" value="UniProtKB-UniRule"/>
</dbReference>
<dbReference type="CDD" id="cd00560">
    <property type="entry name" value="PanC"/>
    <property type="match status" value="1"/>
</dbReference>
<dbReference type="Gene3D" id="3.40.50.620">
    <property type="entry name" value="HUPs"/>
    <property type="match status" value="1"/>
</dbReference>
<dbReference type="Gene3D" id="3.30.1300.10">
    <property type="entry name" value="Pantoate-beta-alanine ligase, C-terminal domain"/>
    <property type="match status" value="1"/>
</dbReference>
<dbReference type="HAMAP" id="MF_00158">
    <property type="entry name" value="PanC"/>
    <property type="match status" value="1"/>
</dbReference>
<dbReference type="InterPro" id="IPR004821">
    <property type="entry name" value="Cyt_trans-like"/>
</dbReference>
<dbReference type="InterPro" id="IPR003721">
    <property type="entry name" value="Pantoate_ligase"/>
</dbReference>
<dbReference type="InterPro" id="IPR042176">
    <property type="entry name" value="Pantoate_ligase_C"/>
</dbReference>
<dbReference type="InterPro" id="IPR014729">
    <property type="entry name" value="Rossmann-like_a/b/a_fold"/>
</dbReference>
<dbReference type="NCBIfam" id="TIGR00125">
    <property type="entry name" value="cyt_tran_rel"/>
    <property type="match status" value="1"/>
</dbReference>
<dbReference type="NCBIfam" id="TIGR00018">
    <property type="entry name" value="panC"/>
    <property type="match status" value="1"/>
</dbReference>
<dbReference type="PANTHER" id="PTHR21299">
    <property type="entry name" value="CYTIDYLATE KINASE/PANTOATE-BETA-ALANINE LIGASE"/>
    <property type="match status" value="1"/>
</dbReference>
<dbReference type="PANTHER" id="PTHR21299:SF1">
    <property type="entry name" value="PANTOATE--BETA-ALANINE LIGASE"/>
    <property type="match status" value="1"/>
</dbReference>
<dbReference type="Pfam" id="PF02569">
    <property type="entry name" value="Pantoate_ligase"/>
    <property type="match status" value="1"/>
</dbReference>
<dbReference type="SUPFAM" id="SSF52374">
    <property type="entry name" value="Nucleotidylyl transferase"/>
    <property type="match status" value="1"/>
</dbReference>
<protein>
    <recommendedName>
        <fullName evidence="1">Pantothenate synthetase</fullName>
        <shortName evidence="1">PS</shortName>
        <ecNumber evidence="1">6.3.2.1</ecNumber>
    </recommendedName>
    <alternativeName>
        <fullName evidence="1">Pantoate--beta-alanine ligase</fullName>
    </alternativeName>
    <alternativeName>
        <fullName evidence="1">Pantoate-activating enzyme</fullName>
    </alternativeName>
</protein>
<name>PANC_THEFY</name>
<accession>Q47KV5</accession>
<organism>
    <name type="scientific">Thermobifida fusca (strain YX)</name>
    <dbReference type="NCBI Taxonomy" id="269800"/>
    <lineage>
        <taxon>Bacteria</taxon>
        <taxon>Bacillati</taxon>
        <taxon>Actinomycetota</taxon>
        <taxon>Actinomycetes</taxon>
        <taxon>Streptosporangiales</taxon>
        <taxon>Nocardiopsidaceae</taxon>
        <taxon>Thermobifida</taxon>
    </lineage>
</organism>
<reference key="1">
    <citation type="journal article" date="2007" name="J. Bacteriol.">
        <title>Genome sequence and analysis of the soil cellulolytic actinomycete Thermobifida fusca YX.</title>
        <authorList>
            <person name="Lykidis A."/>
            <person name="Mavromatis K."/>
            <person name="Ivanova N."/>
            <person name="Anderson I."/>
            <person name="Land M."/>
            <person name="DiBartolo G."/>
            <person name="Martinez M."/>
            <person name="Lapidus A."/>
            <person name="Lucas S."/>
            <person name="Copeland A."/>
            <person name="Richardson P."/>
            <person name="Wilson D.B."/>
            <person name="Kyrpides N."/>
        </authorList>
    </citation>
    <scope>NUCLEOTIDE SEQUENCE [LARGE SCALE GENOMIC DNA]</scope>
    <source>
        <strain>YX</strain>
    </source>
</reference>